<reference key="1">
    <citation type="journal article" date="2009" name="J. Bacteriol.">
        <title>The complete genome sequence of Helicobacter pylori strain G27.</title>
        <authorList>
            <person name="Baltrus D.A."/>
            <person name="Amieva M.R."/>
            <person name="Covacci A."/>
            <person name="Lowe T.M."/>
            <person name="Merrell D.S."/>
            <person name="Ottemann K.M."/>
            <person name="Stein M."/>
            <person name="Salama N.R."/>
            <person name="Guillemin K."/>
        </authorList>
    </citation>
    <scope>NUCLEOTIDE SEQUENCE [LARGE SCALE GENOMIC DNA]</scope>
    <source>
        <strain>G27</strain>
    </source>
</reference>
<dbReference type="EMBL" id="CP001173">
    <property type="protein sequence ID" value="ACI27575.1"/>
    <property type="molecule type" value="Genomic_DNA"/>
</dbReference>
<dbReference type="RefSeq" id="WP_001031343.1">
    <property type="nucleotide sequence ID" value="NC_011333.1"/>
</dbReference>
<dbReference type="SMR" id="B5Z7M6"/>
<dbReference type="KEGG" id="hpg:HPG27_820"/>
<dbReference type="HOGENOM" id="CLU_101379_2_0_7"/>
<dbReference type="Proteomes" id="UP000001735">
    <property type="component" value="Chromosome"/>
</dbReference>
<dbReference type="GO" id="GO:0003677">
    <property type="term" value="F:DNA binding"/>
    <property type="evidence" value="ECO:0007669"/>
    <property type="project" value="UniProtKB-UniRule"/>
</dbReference>
<dbReference type="GO" id="GO:0070063">
    <property type="term" value="F:RNA polymerase binding"/>
    <property type="evidence" value="ECO:0007669"/>
    <property type="project" value="InterPro"/>
</dbReference>
<dbReference type="GO" id="GO:0006354">
    <property type="term" value="P:DNA-templated transcription elongation"/>
    <property type="evidence" value="ECO:0007669"/>
    <property type="project" value="TreeGrafter"/>
</dbReference>
<dbReference type="GO" id="GO:0032784">
    <property type="term" value="P:regulation of DNA-templated transcription elongation"/>
    <property type="evidence" value="ECO:0007669"/>
    <property type="project" value="UniProtKB-UniRule"/>
</dbReference>
<dbReference type="FunFam" id="1.10.287.180:FF:000001">
    <property type="entry name" value="Transcription elongation factor GreA"/>
    <property type="match status" value="1"/>
</dbReference>
<dbReference type="FunFam" id="3.10.50.30:FF:000001">
    <property type="entry name" value="Transcription elongation factor GreA"/>
    <property type="match status" value="1"/>
</dbReference>
<dbReference type="Gene3D" id="3.10.50.30">
    <property type="entry name" value="Transcription elongation factor, GreA/GreB, C-terminal domain"/>
    <property type="match status" value="1"/>
</dbReference>
<dbReference type="Gene3D" id="1.10.287.180">
    <property type="entry name" value="Transcription elongation factor, GreA/GreB, N-terminal domain"/>
    <property type="match status" value="1"/>
</dbReference>
<dbReference type="HAMAP" id="MF_00105">
    <property type="entry name" value="GreA_GreB"/>
    <property type="match status" value="1"/>
</dbReference>
<dbReference type="InterPro" id="IPR036953">
    <property type="entry name" value="GreA/GreB_C_sf"/>
</dbReference>
<dbReference type="InterPro" id="IPR018151">
    <property type="entry name" value="TF_GreA/GreB_CS"/>
</dbReference>
<dbReference type="InterPro" id="IPR006359">
    <property type="entry name" value="Tscrpt_elong_fac_GreA"/>
</dbReference>
<dbReference type="InterPro" id="IPR028624">
    <property type="entry name" value="Tscrpt_elong_fac_GreA/B"/>
</dbReference>
<dbReference type="InterPro" id="IPR001437">
    <property type="entry name" value="Tscrpt_elong_fac_GreA/B_C"/>
</dbReference>
<dbReference type="InterPro" id="IPR023459">
    <property type="entry name" value="Tscrpt_elong_fac_GreA/B_fam"/>
</dbReference>
<dbReference type="InterPro" id="IPR022691">
    <property type="entry name" value="Tscrpt_elong_fac_GreA/B_N"/>
</dbReference>
<dbReference type="InterPro" id="IPR036805">
    <property type="entry name" value="Tscrpt_elong_fac_GreA/B_N_sf"/>
</dbReference>
<dbReference type="NCBIfam" id="TIGR01462">
    <property type="entry name" value="greA"/>
    <property type="match status" value="1"/>
</dbReference>
<dbReference type="NCBIfam" id="NF001261">
    <property type="entry name" value="PRK00226.1-2"/>
    <property type="match status" value="1"/>
</dbReference>
<dbReference type="NCBIfam" id="NF001263">
    <property type="entry name" value="PRK00226.1-4"/>
    <property type="match status" value="1"/>
</dbReference>
<dbReference type="NCBIfam" id="NF001264">
    <property type="entry name" value="PRK00226.1-5"/>
    <property type="match status" value="1"/>
</dbReference>
<dbReference type="PANTHER" id="PTHR30437">
    <property type="entry name" value="TRANSCRIPTION ELONGATION FACTOR GREA"/>
    <property type="match status" value="1"/>
</dbReference>
<dbReference type="PANTHER" id="PTHR30437:SF4">
    <property type="entry name" value="TRANSCRIPTION ELONGATION FACTOR GREA"/>
    <property type="match status" value="1"/>
</dbReference>
<dbReference type="Pfam" id="PF01272">
    <property type="entry name" value="GreA_GreB"/>
    <property type="match status" value="1"/>
</dbReference>
<dbReference type="Pfam" id="PF03449">
    <property type="entry name" value="GreA_GreB_N"/>
    <property type="match status" value="1"/>
</dbReference>
<dbReference type="PIRSF" id="PIRSF006092">
    <property type="entry name" value="GreA_GreB"/>
    <property type="match status" value="1"/>
</dbReference>
<dbReference type="SUPFAM" id="SSF54534">
    <property type="entry name" value="FKBP-like"/>
    <property type="match status" value="1"/>
</dbReference>
<dbReference type="SUPFAM" id="SSF46557">
    <property type="entry name" value="GreA transcript cleavage protein, N-terminal domain"/>
    <property type="match status" value="1"/>
</dbReference>
<dbReference type="PROSITE" id="PS00829">
    <property type="entry name" value="GREAB_1"/>
    <property type="match status" value="1"/>
</dbReference>
<dbReference type="PROSITE" id="PS00830">
    <property type="entry name" value="GREAB_2"/>
    <property type="match status" value="1"/>
</dbReference>
<sequence>MNKEPMSMHGYNKICAELKQLKEVERPNIVKEIDIARGHGDLKENAEYHAAKEKQRFIEARIVDLSEIVANAQVIDPSVLAHNKVSFGSTIKILNLDNDKEFSYTIVGSVESDPAKGLISFGSPIAKSLIGKSKGDAVSIQLPNGESDFEILDIYYKEICFDEN</sequence>
<gene>
    <name evidence="1" type="primary">greA</name>
    <name type="ordered locus">HPG27_820</name>
</gene>
<protein>
    <recommendedName>
        <fullName evidence="1">Transcription elongation factor GreA</fullName>
    </recommendedName>
    <alternativeName>
        <fullName evidence="1">Transcript cleavage factor GreA</fullName>
    </alternativeName>
</protein>
<evidence type="ECO:0000255" key="1">
    <source>
        <dbReference type="HAMAP-Rule" id="MF_00105"/>
    </source>
</evidence>
<organism>
    <name type="scientific">Helicobacter pylori (strain G27)</name>
    <dbReference type="NCBI Taxonomy" id="563041"/>
    <lineage>
        <taxon>Bacteria</taxon>
        <taxon>Pseudomonadati</taxon>
        <taxon>Campylobacterota</taxon>
        <taxon>Epsilonproteobacteria</taxon>
        <taxon>Campylobacterales</taxon>
        <taxon>Helicobacteraceae</taxon>
        <taxon>Helicobacter</taxon>
    </lineage>
</organism>
<accession>B5Z7M6</accession>
<comment type="function">
    <text evidence="1">Necessary for efficient RNA polymerase transcription elongation past template-encoded arresting sites. The arresting sites in DNA have the property of trapping a certain fraction of elongating RNA polymerases that pass through, resulting in locked ternary complexes. Cleavage of the nascent transcript by cleavage factors such as GreA or GreB allows the resumption of elongation from the new 3'terminus. GreA releases sequences of 2 to 3 nucleotides.</text>
</comment>
<comment type="similarity">
    <text evidence="1">Belongs to the GreA/GreB family.</text>
</comment>
<name>GREA_HELPG</name>
<feature type="chain" id="PRO_1000094172" description="Transcription elongation factor GreA">
    <location>
        <begin position="1"/>
        <end position="164"/>
    </location>
</feature>
<keyword id="KW-0238">DNA-binding</keyword>
<keyword id="KW-1185">Reference proteome</keyword>
<keyword id="KW-0804">Transcription</keyword>
<keyword id="KW-0805">Transcription regulation</keyword>
<proteinExistence type="inferred from homology"/>